<proteinExistence type="inferred from homology"/>
<gene>
    <name type="primary">ddx20</name>
</gene>
<sequence>MAASVKAAHELQSRTRTDDVLISGGVEFSSLLLSKPVLEGLSASGFQRPSPIQLKAIPLGRCGLDLIVQAKSGTGKTCVFTTIALDSLILENATTQVLVLAPTREIAVQIHAVVMAIGSAMEGLECHVFIGGRPISQDKQHLKKCHIAIGSPGRIKQLIEMGALMVSSIRLFVLDEADKLLEDDSSSSFQEQINWIYSSLPANKQMLALSATYPESLAQQLSRYMREPTFVRLNPTDPGLLGLKQYYKIVPSHSLPHKVFEEKVQSLLELFSKIPFNQALVFSNLHTRAQHLADILSSKGLPAVCISGGLSQDQRLEAMWKLKQYQCRVLISTDLTSRGIDAEKVNLVINLDVPQDWETYMHRIGRAGRFGTLGVAVTYCCHGEEENKMMAIAQKCSLDLMHLPDPIPPGIMEEACDHDVIIETLSKPKIPDNFKPEKKKKAKSEQMKSKPSRESHISVVITESVTGDKSCSRAETKTKNHSPKPGRQKQMAPAANLQHDSTITQKQQNNTLPKIPPLSSFKSHTGKRMTFDDALVDYETFIREGPGRSVEIIHQYDGFYRSQDKVNGLHDAHDEDEASESYVLEESQSHQDLPPAQEVSELSSEQKTSSESSSESEMEVESESSSSVPSKSTLEALPDNKVSLVRNHSELAKSTLPSTRVPQQATRSKQKPCQPQSQDTAHHHNLPHKHRTASKSSRRPTGPKRRTRETDETEEEEAGQDYWSSYRAWAEYYNSYYHHSPYNWMTAFYMNSVYIKEMMKH</sequence>
<feature type="chain" id="PRO_0000259533" description="Probable ATP-dependent RNA helicase DDX20">
    <location>
        <begin position="1"/>
        <end position="761"/>
    </location>
</feature>
<feature type="domain" description="Helicase ATP-binding" evidence="3">
    <location>
        <begin position="57"/>
        <end position="231"/>
    </location>
</feature>
<feature type="domain" description="Helicase C-terminal" evidence="4">
    <location>
        <begin position="266"/>
        <end position="415"/>
    </location>
</feature>
<feature type="region of interest" description="Disordered" evidence="5">
    <location>
        <begin position="428"/>
        <end position="525"/>
    </location>
</feature>
<feature type="region of interest" description="Disordered" evidence="5">
    <location>
        <begin position="570"/>
        <end position="720"/>
    </location>
</feature>
<feature type="short sequence motif" description="Q motif">
    <location>
        <begin position="26"/>
        <end position="54"/>
    </location>
</feature>
<feature type="short sequence motif" description="DEAD box">
    <location>
        <begin position="175"/>
        <end position="178"/>
    </location>
</feature>
<feature type="compositionally biased region" description="Basic and acidic residues" evidence="5">
    <location>
        <begin position="443"/>
        <end position="456"/>
    </location>
</feature>
<feature type="compositionally biased region" description="Polar residues" evidence="5">
    <location>
        <begin position="498"/>
        <end position="512"/>
    </location>
</feature>
<feature type="compositionally biased region" description="Low complexity" evidence="5">
    <location>
        <begin position="600"/>
        <end position="613"/>
    </location>
</feature>
<feature type="compositionally biased region" description="Low complexity" evidence="5">
    <location>
        <begin position="623"/>
        <end position="635"/>
    </location>
</feature>
<feature type="compositionally biased region" description="Polar residues" evidence="5">
    <location>
        <begin position="655"/>
        <end position="679"/>
    </location>
</feature>
<feature type="compositionally biased region" description="Basic residues" evidence="5">
    <location>
        <begin position="683"/>
        <end position="707"/>
    </location>
</feature>
<feature type="binding site" evidence="1">
    <location>
        <position position="48"/>
    </location>
    <ligand>
        <name>ATP</name>
        <dbReference type="ChEBI" id="CHEBI:30616"/>
    </ligand>
</feature>
<feature type="binding site" evidence="1">
    <location>
        <position position="53"/>
    </location>
    <ligand>
        <name>ATP</name>
        <dbReference type="ChEBI" id="CHEBI:30616"/>
    </ligand>
</feature>
<feature type="binding site" evidence="3">
    <location>
        <begin position="70"/>
        <end position="77"/>
    </location>
    <ligand>
        <name>ATP</name>
        <dbReference type="ChEBI" id="CHEBI:30616"/>
    </ligand>
</feature>
<feature type="binding site" evidence="3">
    <location>
        <begin position="73"/>
        <end position="78"/>
    </location>
    <ligand>
        <name>ATP</name>
        <dbReference type="ChEBI" id="CHEBI:30616"/>
    </ligand>
</feature>
<comment type="function">
    <text evidence="2">The SMN complex catalyzes the assembly of small nuclear ribonucleoproteins (snRNPs), the building blocks of the spliceosome, and thereby plays an important role in the splicing of cellular pre-mRNAs. Most spliceosomal snRNPs contain a common set of Sm proteins SNRPB, SNRPD1, SNRPD2, SNRPD3, SNRPE, SNRPF and SNRPG that assemble in a heptameric protein ring on the Sm site of the small nuclear RNA to form the core snRNP (Sm core). In the cytosol, the Sm proteins SNRPD1, SNRPD2, SNRPE, SNRPF and SNRPG are trapped in an inactive 6S pICln-Sm complex by the chaperone CLNS1A that controls the assembly of the core snRNP. To assemble core snRNPs, the SMN complex accepts the trapped 5Sm proteins from CLNS1A forming an intermediate. Binding of snRNA inside 5Sm triggers eviction of the SMN complex, thereby allowing binding of SNRPD3 and SNRPB to complete assembly of the core snRNP. May also play a role in the metabolism of small nucleolar ribonucleoprotein (snoRNPs) (By similarity).</text>
</comment>
<comment type="catalytic activity">
    <reaction evidence="2">
        <text>ATP + H2O = ADP + phosphate + H(+)</text>
        <dbReference type="Rhea" id="RHEA:13065"/>
        <dbReference type="ChEBI" id="CHEBI:15377"/>
        <dbReference type="ChEBI" id="CHEBI:15378"/>
        <dbReference type="ChEBI" id="CHEBI:30616"/>
        <dbReference type="ChEBI" id="CHEBI:43474"/>
        <dbReference type="ChEBI" id="CHEBI:456216"/>
        <dbReference type="EC" id="3.6.4.13"/>
    </reaction>
    <physiologicalReaction direction="left-to-right" evidence="2">
        <dbReference type="Rhea" id="RHEA:13066"/>
    </physiologicalReaction>
</comment>
<comment type="catalytic activity">
    <reaction evidence="2">
        <text>a ribonucleoside 5'-triphosphate + H2O = a ribonucleoside 5'-diphosphate + phosphate + H(+)</text>
        <dbReference type="Rhea" id="RHEA:23680"/>
        <dbReference type="ChEBI" id="CHEBI:15377"/>
        <dbReference type="ChEBI" id="CHEBI:15378"/>
        <dbReference type="ChEBI" id="CHEBI:43474"/>
        <dbReference type="ChEBI" id="CHEBI:57930"/>
        <dbReference type="ChEBI" id="CHEBI:61557"/>
        <dbReference type="EC" id="3.6.1.15"/>
    </reaction>
    <physiologicalReaction direction="left-to-right" evidence="2">
        <dbReference type="Rhea" id="RHEA:23681"/>
    </physiologicalReaction>
</comment>
<comment type="subunit">
    <text evidence="2">Part of the core SMN complex.</text>
</comment>
<comment type="subcellular location">
    <subcellularLocation>
        <location evidence="2">Cytoplasm</location>
    </subcellularLocation>
    <subcellularLocation>
        <location evidence="2">Nucleus</location>
    </subcellularLocation>
</comment>
<comment type="similarity">
    <text evidence="6">Belongs to the DEAD box helicase family. DDX20 subfamily.</text>
</comment>
<evidence type="ECO:0000250" key="1"/>
<evidence type="ECO:0000250" key="2">
    <source>
        <dbReference type="UniProtKB" id="Q9UHI6"/>
    </source>
</evidence>
<evidence type="ECO:0000255" key="3">
    <source>
        <dbReference type="PROSITE-ProRule" id="PRU00541"/>
    </source>
</evidence>
<evidence type="ECO:0000255" key="4">
    <source>
        <dbReference type="PROSITE-ProRule" id="PRU00542"/>
    </source>
</evidence>
<evidence type="ECO:0000256" key="5">
    <source>
        <dbReference type="SAM" id="MobiDB-lite"/>
    </source>
</evidence>
<evidence type="ECO:0000305" key="6"/>
<organism>
    <name type="scientific">Danio rerio</name>
    <name type="common">Zebrafish</name>
    <name type="synonym">Brachydanio rerio</name>
    <dbReference type="NCBI Taxonomy" id="7955"/>
    <lineage>
        <taxon>Eukaryota</taxon>
        <taxon>Metazoa</taxon>
        <taxon>Chordata</taxon>
        <taxon>Craniata</taxon>
        <taxon>Vertebrata</taxon>
        <taxon>Euteleostomi</taxon>
        <taxon>Actinopterygii</taxon>
        <taxon>Neopterygii</taxon>
        <taxon>Teleostei</taxon>
        <taxon>Ostariophysi</taxon>
        <taxon>Cypriniformes</taxon>
        <taxon>Danionidae</taxon>
        <taxon>Danioninae</taxon>
        <taxon>Danio</taxon>
    </lineage>
</organism>
<accession>P0C218</accession>
<keyword id="KW-0067">ATP-binding</keyword>
<keyword id="KW-0963">Cytoplasm</keyword>
<keyword id="KW-0238">DNA-binding</keyword>
<keyword id="KW-0347">Helicase</keyword>
<keyword id="KW-0378">Hydrolase</keyword>
<keyword id="KW-0507">mRNA processing</keyword>
<keyword id="KW-0508">mRNA splicing</keyword>
<keyword id="KW-0547">Nucleotide-binding</keyword>
<keyword id="KW-0539">Nucleus</keyword>
<keyword id="KW-1185">Reference proteome</keyword>
<dbReference type="EC" id="3.6.1.15" evidence="2"/>
<dbReference type="EC" id="3.6.4.13" evidence="2"/>
<dbReference type="EMBL" id="BX664742">
    <property type="status" value="NOT_ANNOTATED_CDS"/>
    <property type="molecule type" value="Genomic_DNA"/>
</dbReference>
<dbReference type="SMR" id="P0C218"/>
<dbReference type="FunCoup" id="P0C218">
    <property type="interactions" value="339"/>
</dbReference>
<dbReference type="STRING" id="7955.ENSDARP00000143528"/>
<dbReference type="PaxDb" id="7955-ENSDARP00000118603"/>
<dbReference type="eggNOG" id="KOG4284">
    <property type="taxonomic scope" value="Eukaryota"/>
</dbReference>
<dbReference type="InParanoid" id="P0C218"/>
<dbReference type="OrthoDB" id="434041at2759"/>
<dbReference type="Proteomes" id="UP000000437">
    <property type="component" value="Unplaced"/>
</dbReference>
<dbReference type="GO" id="GO:0005829">
    <property type="term" value="C:cytosol"/>
    <property type="evidence" value="ECO:0000250"/>
    <property type="project" value="UniProtKB"/>
</dbReference>
<dbReference type="GO" id="GO:0005634">
    <property type="term" value="C:nucleus"/>
    <property type="evidence" value="ECO:0007669"/>
    <property type="project" value="UniProtKB-SubCell"/>
</dbReference>
<dbReference type="GO" id="GO:0032797">
    <property type="term" value="C:SMN complex"/>
    <property type="evidence" value="ECO:0000250"/>
    <property type="project" value="UniProtKB"/>
</dbReference>
<dbReference type="GO" id="GO:0034719">
    <property type="term" value="C:SMN-Sm protein complex"/>
    <property type="evidence" value="ECO:0000250"/>
    <property type="project" value="UniProtKB"/>
</dbReference>
<dbReference type="GO" id="GO:0005524">
    <property type="term" value="F:ATP binding"/>
    <property type="evidence" value="ECO:0007669"/>
    <property type="project" value="UniProtKB-KW"/>
</dbReference>
<dbReference type="GO" id="GO:0016887">
    <property type="term" value="F:ATP hydrolysis activity"/>
    <property type="evidence" value="ECO:0007669"/>
    <property type="project" value="RHEA"/>
</dbReference>
<dbReference type="GO" id="GO:0003677">
    <property type="term" value="F:DNA binding"/>
    <property type="evidence" value="ECO:0007669"/>
    <property type="project" value="UniProtKB-KW"/>
</dbReference>
<dbReference type="GO" id="GO:0003724">
    <property type="term" value="F:RNA helicase activity"/>
    <property type="evidence" value="ECO:0007669"/>
    <property type="project" value="UniProtKB-EC"/>
</dbReference>
<dbReference type="GO" id="GO:0000387">
    <property type="term" value="P:spliceosomal snRNP assembly"/>
    <property type="evidence" value="ECO:0000250"/>
    <property type="project" value="UniProtKB"/>
</dbReference>
<dbReference type="CDD" id="cd17943">
    <property type="entry name" value="DEADc_DDX20"/>
    <property type="match status" value="1"/>
</dbReference>
<dbReference type="CDD" id="cd18787">
    <property type="entry name" value="SF2_C_DEAD"/>
    <property type="match status" value="1"/>
</dbReference>
<dbReference type="FunFam" id="3.40.50.300:FF:001021">
    <property type="entry name" value="Probable ATP-dependent RNA helicase DDX20"/>
    <property type="match status" value="1"/>
</dbReference>
<dbReference type="Gene3D" id="3.40.50.300">
    <property type="entry name" value="P-loop containing nucleotide triphosphate hydrolases"/>
    <property type="match status" value="2"/>
</dbReference>
<dbReference type="InterPro" id="IPR011545">
    <property type="entry name" value="DEAD/DEAH_box_helicase_dom"/>
</dbReference>
<dbReference type="InterPro" id="IPR050079">
    <property type="entry name" value="DEAD_box_RNA_helicase"/>
</dbReference>
<dbReference type="InterPro" id="IPR014001">
    <property type="entry name" value="Helicase_ATP-bd"/>
</dbReference>
<dbReference type="InterPro" id="IPR001650">
    <property type="entry name" value="Helicase_C-like"/>
</dbReference>
<dbReference type="InterPro" id="IPR027417">
    <property type="entry name" value="P-loop_NTPase"/>
</dbReference>
<dbReference type="InterPro" id="IPR000629">
    <property type="entry name" value="RNA-helicase_DEAD-box_CS"/>
</dbReference>
<dbReference type="InterPro" id="IPR014014">
    <property type="entry name" value="RNA_helicase_DEAD_Q_motif"/>
</dbReference>
<dbReference type="PANTHER" id="PTHR47959:SF1">
    <property type="entry name" value="ATP-DEPENDENT RNA HELICASE DBPA"/>
    <property type="match status" value="1"/>
</dbReference>
<dbReference type="PANTHER" id="PTHR47959">
    <property type="entry name" value="ATP-DEPENDENT RNA HELICASE RHLE-RELATED"/>
    <property type="match status" value="1"/>
</dbReference>
<dbReference type="Pfam" id="PF00270">
    <property type="entry name" value="DEAD"/>
    <property type="match status" value="1"/>
</dbReference>
<dbReference type="Pfam" id="PF00271">
    <property type="entry name" value="Helicase_C"/>
    <property type="match status" value="1"/>
</dbReference>
<dbReference type="SMART" id="SM00487">
    <property type="entry name" value="DEXDc"/>
    <property type="match status" value="1"/>
</dbReference>
<dbReference type="SMART" id="SM00490">
    <property type="entry name" value="HELICc"/>
    <property type="match status" value="1"/>
</dbReference>
<dbReference type="SUPFAM" id="SSF52540">
    <property type="entry name" value="P-loop containing nucleoside triphosphate hydrolases"/>
    <property type="match status" value="1"/>
</dbReference>
<dbReference type="PROSITE" id="PS00039">
    <property type="entry name" value="DEAD_ATP_HELICASE"/>
    <property type="match status" value="1"/>
</dbReference>
<dbReference type="PROSITE" id="PS51192">
    <property type="entry name" value="HELICASE_ATP_BIND_1"/>
    <property type="match status" value="1"/>
</dbReference>
<dbReference type="PROSITE" id="PS51194">
    <property type="entry name" value="HELICASE_CTER"/>
    <property type="match status" value="1"/>
</dbReference>
<dbReference type="PROSITE" id="PS51195">
    <property type="entry name" value="Q_MOTIF"/>
    <property type="match status" value="1"/>
</dbReference>
<protein>
    <recommendedName>
        <fullName>Probable ATP-dependent RNA helicase DDX20</fullName>
        <ecNumber evidence="2">3.6.1.15</ecNumber>
        <ecNumber evidence="2">3.6.4.13</ecNumber>
    </recommendedName>
    <alternativeName>
        <fullName>DEAD box protein 20</fullName>
    </alternativeName>
</protein>
<name>DDX20_DANRE</name>
<reference key="1">
    <citation type="journal article" date="2013" name="Nature">
        <title>The zebrafish reference genome sequence and its relationship to the human genome.</title>
        <authorList>
            <person name="Howe K."/>
            <person name="Clark M.D."/>
            <person name="Torroja C.F."/>
            <person name="Torrance J."/>
            <person name="Berthelot C."/>
            <person name="Muffato M."/>
            <person name="Collins J.E."/>
            <person name="Humphray S."/>
            <person name="McLaren K."/>
            <person name="Matthews L."/>
            <person name="McLaren S."/>
            <person name="Sealy I."/>
            <person name="Caccamo M."/>
            <person name="Churcher C."/>
            <person name="Scott C."/>
            <person name="Barrett J.C."/>
            <person name="Koch R."/>
            <person name="Rauch G.J."/>
            <person name="White S."/>
            <person name="Chow W."/>
            <person name="Kilian B."/>
            <person name="Quintais L.T."/>
            <person name="Guerra-Assuncao J.A."/>
            <person name="Zhou Y."/>
            <person name="Gu Y."/>
            <person name="Yen J."/>
            <person name="Vogel J.H."/>
            <person name="Eyre T."/>
            <person name="Redmond S."/>
            <person name="Banerjee R."/>
            <person name="Chi J."/>
            <person name="Fu B."/>
            <person name="Langley E."/>
            <person name="Maguire S.F."/>
            <person name="Laird G.K."/>
            <person name="Lloyd D."/>
            <person name="Kenyon E."/>
            <person name="Donaldson S."/>
            <person name="Sehra H."/>
            <person name="Almeida-King J."/>
            <person name="Loveland J."/>
            <person name="Trevanion S."/>
            <person name="Jones M."/>
            <person name="Quail M."/>
            <person name="Willey D."/>
            <person name="Hunt A."/>
            <person name="Burton J."/>
            <person name="Sims S."/>
            <person name="McLay K."/>
            <person name="Plumb B."/>
            <person name="Davis J."/>
            <person name="Clee C."/>
            <person name="Oliver K."/>
            <person name="Clark R."/>
            <person name="Riddle C."/>
            <person name="Elliot D."/>
            <person name="Threadgold G."/>
            <person name="Harden G."/>
            <person name="Ware D."/>
            <person name="Begum S."/>
            <person name="Mortimore B."/>
            <person name="Kerry G."/>
            <person name="Heath P."/>
            <person name="Phillimore B."/>
            <person name="Tracey A."/>
            <person name="Corby N."/>
            <person name="Dunn M."/>
            <person name="Johnson C."/>
            <person name="Wood J."/>
            <person name="Clark S."/>
            <person name="Pelan S."/>
            <person name="Griffiths G."/>
            <person name="Smith M."/>
            <person name="Glithero R."/>
            <person name="Howden P."/>
            <person name="Barker N."/>
            <person name="Lloyd C."/>
            <person name="Stevens C."/>
            <person name="Harley J."/>
            <person name="Holt K."/>
            <person name="Panagiotidis G."/>
            <person name="Lovell J."/>
            <person name="Beasley H."/>
            <person name="Henderson C."/>
            <person name="Gordon D."/>
            <person name="Auger K."/>
            <person name="Wright D."/>
            <person name="Collins J."/>
            <person name="Raisen C."/>
            <person name="Dyer L."/>
            <person name="Leung K."/>
            <person name="Robertson L."/>
            <person name="Ambridge K."/>
            <person name="Leongamornlert D."/>
            <person name="McGuire S."/>
            <person name="Gilderthorp R."/>
            <person name="Griffiths C."/>
            <person name="Manthravadi D."/>
            <person name="Nichol S."/>
            <person name="Barker G."/>
            <person name="Whitehead S."/>
            <person name="Kay M."/>
            <person name="Brown J."/>
            <person name="Murnane C."/>
            <person name="Gray E."/>
            <person name="Humphries M."/>
            <person name="Sycamore N."/>
            <person name="Barker D."/>
            <person name="Saunders D."/>
            <person name="Wallis J."/>
            <person name="Babbage A."/>
            <person name="Hammond S."/>
            <person name="Mashreghi-Mohammadi M."/>
            <person name="Barr L."/>
            <person name="Martin S."/>
            <person name="Wray P."/>
            <person name="Ellington A."/>
            <person name="Matthews N."/>
            <person name="Ellwood M."/>
            <person name="Woodmansey R."/>
            <person name="Clark G."/>
            <person name="Cooper J."/>
            <person name="Tromans A."/>
            <person name="Grafham D."/>
            <person name="Skuce C."/>
            <person name="Pandian R."/>
            <person name="Andrews R."/>
            <person name="Harrison E."/>
            <person name="Kimberley A."/>
            <person name="Garnett J."/>
            <person name="Fosker N."/>
            <person name="Hall R."/>
            <person name="Garner P."/>
            <person name="Kelly D."/>
            <person name="Bird C."/>
            <person name="Palmer S."/>
            <person name="Gehring I."/>
            <person name="Berger A."/>
            <person name="Dooley C.M."/>
            <person name="Ersan-Urun Z."/>
            <person name="Eser C."/>
            <person name="Geiger H."/>
            <person name="Geisler M."/>
            <person name="Karotki L."/>
            <person name="Kirn A."/>
            <person name="Konantz J."/>
            <person name="Konantz M."/>
            <person name="Oberlander M."/>
            <person name="Rudolph-Geiger S."/>
            <person name="Teucke M."/>
            <person name="Lanz C."/>
            <person name="Raddatz G."/>
            <person name="Osoegawa K."/>
            <person name="Zhu B."/>
            <person name="Rapp A."/>
            <person name="Widaa S."/>
            <person name="Langford C."/>
            <person name="Yang F."/>
            <person name="Schuster S.C."/>
            <person name="Carter N.P."/>
            <person name="Harrow J."/>
            <person name="Ning Z."/>
            <person name="Herrero J."/>
            <person name="Searle S.M."/>
            <person name="Enright A."/>
            <person name="Geisler R."/>
            <person name="Plasterk R.H."/>
            <person name="Lee C."/>
            <person name="Westerfield M."/>
            <person name="de Jong P.J."/>
            <person name="Zon L.I."/>
            <person name="Postlethwait J.H."/>
            <person name="Nusslein-Volhard C."/>
            <person name="Hubbard T.J."/>
            <person name="Roest Crollius H."/>
            <person name="Rogers J."/>
            <person name="Stemple D.L."/>
        </authorList>
    </citation>
    <scope>NUCLEOTIDE SEQUENCE [LARGE SCALE GENOMIC DNA]</scope>
    <source>
        <strain>Tuebingen</strain>
    </source>
</reference>